<protein>
    <recommendedName>
        <fullName evidence="1">UPF0298 protein SaurJH9_1181</fullName>
    </recommendedName>
</protein>
<dbReference type="EMBL" id="CP000703">
    <property type="protein sequence ID" value="ABQ48981.1"/>
    <property type="molecule type" value="Genomic_DNA"/>
</dbReference>
<dbReference type="RefSeq" id="WP_001049150.1">
    <property type="nucleotide sequence ID" value="NC_009487.1"/>
</dbReference>
<dbReference type="SMR" id="A5IS08"/>
<dbReference type="KEGG" id="saj:SaurJH9_1181"/>
<dbReference type="HOGENOM" id="CLU_159890_2_1_9"/>
<dbReference type="GO" id="GO:0005737">
    <property type="term" value="C:cytoplasm"/>
    <property type="evidence" value="ECO:0007669"/>
    <property type="project" value="UniProtKB-SubCell"/>
</dbReference>
<dbReference type="HAMAP" id="MF_01126">
    <property type="entry name" value="UPF0298"/>
    <property type="match status" value="1"/>
</dbReference>
<dbReference type="InterPro" id="IPR016979">
    <property type="entry name" value="DUF2129"/>
</dbReference>
<dbReference type="Pfam" id="PF09902">
    <property type="entry name" value="DUF2129"/>
    <property type="match status" value="1"/>
</dbReference>
<dbReference type="PIRSF" id="PIRSF031653">
    <property type="entry name" value="UCP031653"/>
    <property type="match status" value="1"/>
</dbReference>
<sequence>MNLIPRTSIVVYLKHMKHERQIRKYGHIVHSNRDRKFVIMYVNEQDVDQIVHKLMQLKYVRHIDGSPYKYLKKTYEKEKHEIYN</sequence>
<feature type="chain" id="PRO_1000085016" description="UPF0298 protein SaurJH9_1181">
    <location>
        <begin position="1"/>
        <end position="84"/>
    </location>
</feature>
<comment type="subcellular location">
    <subcellularLocation>
        <location evidence="1">Cytoplasm</location>
    </subcellularLocation>
</comment>
<comment type="similarity">
    <text evidence="1">Belongs to the UPF0298 family.</text>
</comment>
<reference key="1">
    <citation type="submission" date="2007-05" db="EMBL/GenBank/DDBJ databases">
        <title>Complete sequence of chromosome of Staphylococcus aureus subsp. aureus JH9.</title>
        <authorList>
            <consortium name="US DOE Joint Genome Institute"/>
            <person name="Copeland A."/>
            <person name="Lucas S."/>
            <person name="Lapidus A."/>
            <person name="Barry K."/>
            <person name="Detter J.C."/>
            <person name="Glavina del Rio T."/>
            <person name="Hammon N."/>
            <person name="Israni S."/>
            <person name="Pitluck S."/>
            <person name="Chain P."/>
            <person name="Malfatti S."/>
            <person name="Shin M."/>
            <person name="Vergez L."/>
            <person name="Schmutz J."/>
            <person name="Larimer F."/>
            <person name="Land M."/>
            <person name="Hauser L."/>
            <person name="Kyrpides N."/>
            <person name="Kim E."/>
            <person name="Tomasz A."/>
            <person name="Richardson P."/>
        </authorList>
    </citation>
    <scope>NUCLEOTIDE SEQUENCE [LARGE SCALE GENOMIC DNA]</scope>
    <source>
        <strain>JH9</strain>
    </source>
</reference>
<organism>
    <name type="scientific">Staphylococcus aureus (strain JH9)</name>
    <dbReference type="NCBI Taxonomy" id="359786"/>
    <lineage>
        <taxon>Bacteria</taxon>
        <taxon>Bacillati</taxon>
        <taxon>Bacillota</taxon>
        <taxon>Bacilli</taxon>
        <taxon>Bacillales</taxon>
        <taxon>Staphylococcaceae</taxon>
        <taxon>Staphylococcus</taxon>
    </lineage>
</organism>
<name>Y1181_STAA9</name>
<accession>A5IS08</accession>
<proteinExistence type="inferred from homology"/>
<keyword id="KW-0963">Cytoplasm</keyword>
<evidence type="ECO:0000255" key="1">
    <source>
        <dbReference type="HAMAP-Rule" id="MF_01126"/>
    </source>
</evidence>
<gene>
    <name type="ordered locus">SaurJH9_1181</name>
</gene>